<dbReference type="EC" id="3.1.26.4" evidence="1"/>
<dbReference type="EMBL" id="CP001391">
    <property type="protein sequence ID" value="ACN95956.1"/>
    <property type="molecule type" value="Genomic_DNA"/>
</dbReference>
<dbReference type="RefSeq" id="WP_012673407.1">
    <property type="nucleotide sequence ID" value="NZ_MKIF01000107.1"/>
</dbReference>
<dbReference type="SMR" id="C0R4W4"/>
<dbReference type="STRING" id="66084.WRi_012780"/>
<dbReference type="KEGG" id="wri:WRi_012780"/>
<dbReference type="HOGENOM" id="CLU_036532_3_2_5"/>
<dbReference type="Proteomes" id="UP000001293">
    <property type="component" value="Chromosome"/>
</dbReference>
<dbReference type="GO" id="GO:0005737">
    <property type="term" value="C:cytoplasm"/>
    <property type="evidence" value="ECO:0007669"/>
    <property type="project" value="UniProtKB-SubCell"/>
</dbReference>
<dbReference type="GO" id="GO:0032299">
    <property type="term" value="C:ribonuclease H2 complex"/>
    <property type="evidence" value="ECO:0007669"/>
    <property type="project" value="TreeGrafter"/>
</dbReference>
<dbReference type="GO" id="GO:0030145">
    <property type="term" value="F:manganese ion binding"/>
    <property type="evidence" value="ECO:0007669"/>
    <property type="project" value="UniProtKB-UniRule"/>
</dbReference>
<dbReference type="GO" id="GO:0003723">
    <property type="term" value="F:RNA binding"/>
    <property type="evidence" value="ECO:0007669"/>
    <property type="project" value="InterPro"/>
</dbReference>
<dbReference type="GO" id="GO:0004523">
    <property type="term" value="F:RNA-DNA hybrid ribonuclease activity"/>
    <property type="evidence" value="ECO:0007669"/>
    <property type="project" value="UniProtKB-UniRule"/>
</dbReference>
<dbReference type="GO" id="GO:0043137">
    <property type="term" value="P:DNA replication, removal of RNA primer"/>
    <property type="evidence" value="ECO:0007669"/>
    <property type="project" value="TreeGrafter"/>
</dbReference>
<dbReference type="GO" id="GO:0006298">
    <property type="term" value="P:mismatch repair"/>
    <property type="evidence" value="ECO:0007669"/>
    <property type="project" value="TreeGrafter"/>
</dbReference>
<dbReference type="CDD" id="cd07182">
    <property type="entry name" value="RNase_HII_bacteria_HII_like"/>
    <property type="match status" value="1"/>
</dbReference>
<dbReference type="Gene3D" id="3.30.420.10">
    <property type="entry name" value="Ribonuclease H-like superfamily/Ribonuclease H"/>
    <property type="match status" value="1"/>
</dbReference>
<dbReference type="HAMAP" id="MF_00052_B">
    <property type="entry name" value="RNase_HII_B"/>
    <property type="match status" value="1"/>
</dbReference>
<dbReference type="InterPro" id="IPR022898">
    <property type="entry name" value="RNase_HII"/>
</dbReference>
<dbReference type="InterPro" id="IPR001352">
    <property type="entry name" value="RNase_HII/HIII"/>
</dbReference>
<dbReference type="InterPro" id="IPR024567">
    <property type="entry name" value="RNase_HII/HIII_dom"/>
</dbReference>
<dbReference type="InterPro" id="IPR012337">
    <property type="entry name" value="RNaseH-like_sf"/>
</dbReference>
<dbReference type="InterPro" id="IPR036397">
    <property type="entry name" value="RNaseH_sf"/>
</dbReference>
<dbReference type="NCBIfam" id="NF000595">
    <property type="entry name" value="PRK00015.1-3"/>
    <property type="match status" value="1"/>
</dbReference>
<dbReference type="PANTHER" id="PTHR10954">
    <property type="entry name" value="RIBONUCLEASE H2 SUBUNIT A"/>
    <property type="match status" value="1"/>
</dbReference>
<dbReference type="PANTHER" id="PTHR10954:SF18">
    <property type="entry name" value="RIBONUCLEASE HII"/>
    <property type="match status" value="1"/>
</dbReference>
<dbReference type="Pfam" id="PF01351">
    <property type="entry name" value="RNase_HII"/>
    <property type="match status" value="1"/>
</dbReference>
<dbReference type="SUPFAM" id="SSF53098">
    <property type="entry name" value="Ribonuclease H-like"/>
    <property type="match status" value="1"/>
</dbReference>
<dbReference type="PROSITE" id="PS51975">
    <property type="entry name" value="RNASE_H_2"/>
    <property type="match status" value="1"/>
</dbReference>
<reference key="1">
    <citation type="journal article" date="2009" name="Proc. Natl. Acad. Sci. U.S.A.">
        <title>The mosaic genome structure of the Wolbachia wRi strain infecting Drosophila simulans.</title>
        <authorList>
            <person name="Klasson L."/>
            <person name="Westberg J."/>
            <person name="Sapountzis P."/>
            <person name="Naeslund K."/>
            <person name="Lutnaes Y."/>
            <person name="Darby A.C."/>
            <person name="Veneti Z."/>
            <person name="Chen L."/>
            <person name="Braig H.R."/>
            <person name="Garrett R."/>
            <person name="Bourtzis K."/>
            <person name="Andersson S.G."/>
        </authorList>
    </citation>
    <scope>NUCLEOTIDE SEQUENCE [LARGE SCALE GENOMIC DNA]</scope>
    <source>
        <strain>wRi</strain>
    </source>
</reference>
<protein>
    <recommendedName>
        <fullName evidence="1">Ribonuclease HII</fullName>
        <shortName evidence="1">RNase HII</shortName>
        <ecNumber evidence="1">3.1.26.4</ecNumber>
    </recommendedName>
</protein>
<keyword id="KW-0963">Cytoplasm</keyword>
<keyword id="KW-0255">Endonuclease</keyword>
<keyword id="KW-0378">Hydrolase</keyword>
<keyword id="KW-0464">Manganese</keyword>
<keyword id="KW-0479">Metal-binding</keyword>
<keyword id="KW-0540">Nuclease</keyword>
<accession>C0R4W4</accession>
<evidence type="ECO:0000255" key="1">
    <source>
        <dbReference type="HAMAP-Rule" id="MF_00052"/>
    </source>
</evidence>
<evidence type="ECO:0000255" key="2">
    <source>
        <dbReference type="PROSITE-ProRule" id="PRU01319"/>
    </source>
</evidence>
<sequence length="198" mass="22020">MKYPDFTLENKLSGVIAGVDEVGRGPLAGPVISAAVVFIDRNTIIDGINDSKKLTPQCRQVLYEKIISVAKFGIGMASVEEINSYNILQATKLSMKRALIDLDLELDYVLVDGNQPPEVKWQVKSIVNGDNLSTSIAAASIVAKVTRDRLMQELHNKHPEYNWYKNKGYGTKEHLNAIGLYGITEHHRRNFAPISRAL</sequence>
<feature type="chain" id="PRO_1000117697" description="Ribonuclease HII">
    <location>
        <begin position="1"/>
        <end position="198"/>
    </location>
</feature>
<feature type="domain" description="RNase H type-2" evidence="2">
    <location>
        <begin position="14"/>
        <end position="198"/>
    </location>
</feature>
<feature type="binding site" evidence="1">
    <location>
        <position position="20"/>
    </location>
    <ligand>
        <name>a divalent metal cation</name>
        <dbReference type="ChEBI" id="CHEBI:60240"/>
    </ligand>
</feature>
<feature type="binding site" evidence="1">
    <location>
        <position position="21"/>
    </location>
    <ligand>
        <name>a divalent metal cation</name>
        <dbReference type="ChEBI" id="CHEBI:60240"/>
    </ligand>
</feature>
<feature type="binding site" evidence="1">
    <location>
        <position position="112"/>
    </location>
    <ligand>
        <name>a divalent metal cation</name>
        <dbReference type="ChEBI" id="CHEBI:60240"/>
    </ligand>
</feature>
<name>RNH2_WOLWR</name>
<gene>
    <name evidence="1" type="primary">rnhB</name>
    <name type="ordered locus">WRi_012780</name>
</gene>
<proteinExistence type="inferred from homology"/>
<comment type="function">
    <text evidence="1">Endonuclease that specifically degrades the RNA of RNA-DNA hybrids.</text>
</comment>
<comment type="catalytic activity">
    <reaction evidence="1">
        <text>Endonucleolytic cleavage to 5'-phosphomonoester.</text>
        <dbReference type="EC" id="3.1.26.4"/>
    </reaction>
</comment>
<comment type="cofactor">
    <cofactor evidence="1">
        <name>Mn(2+)</name>
        <dbReference type="ChEBI" id="CHEBI:29035"/>
    </cofactor>
    <cofactor evidence="1">
        <name>Mg(2+)</name>
        <dbReference type="ChEBI" id="CHEBI:18420"/>
    </cofactor>
    <text evidence="1">Manganese or magnesium. Binds 1 divalent metal ion per monomer in the absence of substrate. May bind a second metal ion after substrate binding.</text>
</comment>
<comment type="subcellular location">
    <subcellularLocation>
        <location evidence="1">Cytoplasm</location>
    </subcellularLocation>
</comment>
<comment type="similarity">
    <text evidence="1">Belongs to the RNase HII family.</text>
</comment>
<organism>
    <name type="scientific">Wolbachia sp. subsp. Drosophila simulans (strain wRi)</name>
    <dbReference type="NCBI Taxonomy" id="66084"/>
    <lineage>
        <taxon>Bacteria</taxon>
        <taxon>Pseudomonadati</taxon>
        <taxon>Pseudomonadota</taxon>
        <taxon>Alphaproteobacteria</taxon>
        <taxon>Rickettsiales</taxon>
        <taxon>Anaplasmataceae</taxon>
        <taxon>Wolbachieae</taxon>
        <taxon>Wolbachia</taxon>
    </lineage>
</organism>